<evidence type="ECO:0000255" key="1">
    <source>
        <dbReference type="PROSITE-ProRule" id="PRU00448"/>
    </source>
</evidence>
<evidence type="ECO:0000269" key="2">
    <source>
    </source>
</evidence>
<evidence type="ECO:0000305" key="3"/>
<protein>
    <recommendedName>
        <fullName>Probable calcium-binding protein CML43</fullName>
    </recommendedName>
    <alternativeName>
        <fullName>Calmodulin-like protein 43</fullName>
    </alternativeName>
</protein>
<feature type="chain" id="PRO_0000342966" description="Probable calcium-binding protein CML43">
    <location>
        <begin position="1"/>
        <end position="181"/>
    </location>
</feature>
<feature type="domain" description="EF-hand 1" evidence="1">
    <location>
        <begin position="24"/>
        <end position="59"/>
    </location>
</feature>
<feature type="domain" description="EF-hand 2" evidence="1">
    <location>
        <begin position="107"/>
        <end position="142"/>
    </location>
</feature>
<feature type="domain" description="EF-hand 3" evidence="1">
    <location>
        <begin position="145"/>
        <end position="180"/>
    </location>
</feature>
<feature type="binding site" evidence="1">
    <location>
        <position position="37"/>
    </location>
    <ligand>
        <name>Ca(2+)</name>
        <dbReference type="ChEBI" id="CHEBI:29108"/>
        <label>1</label>
    </ligand>
</feature>
<feature type="binding site" evidence="1">
    <location>
        <position position="39"/>
    </location>
    <ligand>
        <name>Ca(2+)</name>
        <dbReference type="ChEBI" id="CHEBI:29108"/>
        <label>1</label>
    </ligand>
</feature>
<feature type="binding site" evidence="1">
    <location>
        <position position="41"/>
    </location>
    <ligand>
        <name>Ca(2+)</name>
        <dbReference type="ChEBI" id="CHEBI:29108"/>
        <label>1</label>
    </ligand>
</feature>
<feature type="binding site" evidence="1">
    <location>
        <position position="48"/>
    </location>
    <ligand>
        <name>Ca(2+)</name>
        <dbReference type="ChEBI" id="CHEBI:29108"/>
        <label>1</label>
    </ligand>
</feature>
<feature type="binding site" evidence="1">
    <location>
        <position position="120"/>
    </location>
    <ligand>
        <name>Ca(2+)</name>
        <dbReference type="ChEBI" id="CHEBI:29108"/>
        <label>2</label>
    </ligand>
</feature>
<feature type="binding site" evidence="1">
    <location>
        <position position="122"/>
    </location>
    <ligand>
        <name>Ca(2+)</name>
        <dbReference type="ChEBI" id="CHEBI:29108"/>
        <label>2</label>
    </ligand>
</feature>
<feature type="binding site" evidence="1">
    <location>
        <position position="124"/>
    </location>
    <ligand>
        <name>Ca(2+)</name>
        <dbReference type="ChEBI" id="CHEBI:29108"/>
        <label>2</label>
    </ligand>
</feature>
<feature type="binding site" evidence="1">
    <location>
        <position position="131"/>
    </location>
    <ligand>
        <name>Ca(2+)</name>
        <dbReference type="ChEBI" id="CHEBI:29108"/>
        <label>2</label>
    </ligand>
</feature>
<feature type="binding site" evidence="1">
    <location>
        <position position="158"/>
    </location>
    <ligand>
        <name>Ca(2+)</name>
        <dbReference type="ChEBI" id="CHEBI:29108"/>
        <label>3</label>
    </ligand>
</feature>
<feature type="binding site" evidence="1">
    <location>
        <position position="160"/>
    </location>
    <ligand>
        <name>Ca(2+)</name>
        <dbReference type="ChEBI" id="CHEBI:29108"/>
        <label>3</label>
    </ligand>
</feature>
<feature type="binding site" evidence="1">
    <location>
        <position position="162"/>
    </location>
    <ligand>
        <name>Ca(2+)</name>
        <dbReference type="ChEBI" id="CHEBI:29108"/>
        <label>3</label>
    </ligand>
</feature>
<feature type="binding site" evidence="1">
    <location>
        <position position="164"/>
    </location>
    <ligand>
        <name>Ca(2+)</name>
        <dbReference type="ChEBI" id="CHEBI:29108"/>
        <label>3</label>
    </ligand>
</feature>
<feature type="binding site" evidence="1">
    <location>
        <position position="169"/>
    </location>
    <ligand>
        <name>Ca(2+)</name>
        <dbReference type="ChEBI" id="CHEBI:29108"/>
        <label>3</label>
    </ligand>
</feature>
<reference key="1">
    <citation type="journal article" date="1999" name="DNA Res.">
        <title>Structural analysis of Arabidopsis thaliana chromosome 5. IX. Sequence features of the regions of 1,011,550 bp covered by seventeen P1 and TAC clones.</title>
        <authorList>
            <person name="Kaneko T."/>
            <person name="Katoh T."/>
            <person name="Sato S."/>
            <person name="Nakamura Y."/>
            <person name="Asamizu E."/>
            <person name="Kotani H."/>
            <person name="Miyajima N."/>
            <person name="Tabata S."/>
        </authorList>
    </citation>
    <scope>NUCLEOTIDE SEQUENCE [LARGE SCALE GENOMIC DNA]</scope>
    <source>
        <strain>cv. Columbia</strain>
    </source>
</reference>
<reference key="2">
    <citation type="journal article" date="2017" name="Plant J.">
        <title>Araport11: a complete reannotation of the Arabidopsis thaliana reference genome.</title>
        <authorList>
            <person name="Cheng C.Y."/>
            <person name="Krishnakumar V."/>
            <person name="Chan A.P."/>
            <person name="Thibaud-Nissen F."/>
            <person name="Schobel S."/>
            <person name="Town C.D."/>
        </authorList>
    </citation>
    <scope>GENOME REANNOTATION</scope>
    <source>
        <strain>cv. Columbia</strain>
    </source>
</reference>
<reference key="3">
    <citation type="submission" date="2005-02" db="EMBL/GenBank/DDBJ databases">
        <title>Arabidopsis ORF clones.</title>
        <authorList>
            <person name="Cheuk R.F."/>
            <person name="Chen H."/>
            <person name="Kim C.J."/>
            <person name="Shinn P."/>
            <person name="Ecker J.R."/>
        </authorList>
    </citation>
    <scope>NUCLEOTIDE SEQUENCE [LARGE SCALE MRNA]</scope>
    <source>
        <strain>cv. Columbia</strain>
    </source>
</reference>
<reference key="4">
    <citation type="journal article" date="1993" name="Plant J.">
        <title>An inventory of 1152 expressed sequence tags obtained by partial sequencing of cDNAs from Arabidopsis thaliana.</title>
        <authorList>
            <person name="Hoefte H."/>
            <person name="Desprez T."/>
            <person name="Amselem J."/>
            <person name="Chiapello H."/>
            <person name="Rouze P."/>
            <person name="Caboche M."/>
            <person name="Moisan A."/>
            <person name="Jourjon M.-F."/>
            <person name="Charpenteau J.-L."/>
            <person name="Berthomieu P."/>
            <person name="Guerrier D."/>
            <person name="Giraudat J."/>
            <person name="Quigley F."/>
            <person name="Thomas F."/>
            <person name="Yu D.-Y."/>
            <person name="Mache R."/>
            <person name="Raynal M."/>
            <person name="Cooke R."/>
            <person name="Grellet F."/>
            <person name="Delseny M."/>
            <person name="Parmentier Y."/>
            <person name="de Marcillac G."/>
            <person name="Gigot C."/>
            <person name="Fleck J."/>
            <person name="Philipps G."/>
            <person name="Axelos M."/>
            <person name="Bardet C."/>
            <person name="Tremousaygue D."/>
            <person name="Lescure B."/>
        </authorList>
    </citation>
    <scope>NUCLEOTIDE SEQUENCE [LARGE SCALE MRNA] OF 81-181</scope>
    <source>
        <strain>cv. Columbia</strain>
    </source>
</reference>
<reference key="5">
    <citation type="journal article" date="2003" name="New Phytol.">
        <title>Calmodulins and related potential calcium sensors of Arabidopsis.</title>
        <authorList>
            <person name="McCormack E."/>
            <person name="Braam J."/>
        </authorList>
    </citation>
    <scope>GENE FAMILY</scope>
    <scope>NOMENCLATURE</scope>
</reference>
<reference key="6">
    <citation type="journal article" date="2005" name="Plant Mol. Biol.">
        <title>Calmodulin-like proteins from Arabidopsis and tomato are involved in host defense against Pseudomonas syringae pv. tomato.</title>
        <authorList>
            <person name="Chiasson D."/>
            <person name="Ekengren S.K."/>
            <person name="Martin G.B."/>
            <person name="Dobney S.L."/>
            <person name="Snedden W.A."/>
        </authorList>
    </citation>
    <scope>FUNCTION</scope>
    <scope>TISSUE SPECIFICITY</scope>
    <scope>INDUCTION</scope>
</reference>
<dbReference type="EMBL" id="AB017065">
    <property type="protein sequence ID" value="BAB09153.1"/>
    <property type="molecule type" value="Genomic_DNA"/>
</dbReference>
<dbReference type="EMBL" id="CP002688">
    <property type="protein sequence ID" value="AED95111.1"/>
    <property type="molecule type" value="Genomic_DNA"/>
</dbReference>
<dbReference type="EMBL" id="BT010849">
    <property type="protein sequence ID" value="AAR24216.1"/>
    <property type="molecule type" value="mRNA"/>
</dbReference>
<dbReference type="EMBL" id="BT020593">
    <property type="protein sequence ID" value="AAW80866.1"/>
    <property type="molecule type" value="mRNA"/>
</dbReference>
<dbReference type="EMBL" id="Z26706">
    <property type="protein sequence ID" value="CAA81405.1"/>
    <property type="status" value="ALT_FRAME"/>
    <property type="molecule type" value="mRNA"/>
</dbReference>
<dbReference type="RefSeq" id="NP_199259.1">
    <property type="nucleotide sequence ID" value="NM_123813.4"/>
</dbReference>
<dbReference type="SMR" id="Q9FI19"/>
<dbReference type="FunCoup" id="Q9FI19">
    <property type="interactions" value="202"/>
</dbReference>
<dbReference type="STRING" id="3702.Q9FI19"/>
<dbReference type="iPTMnet" id="Q9FI19"/>
<dbReference type="PaxDb" id="3702-AT5G44460.1"/>
<dbReference type="ProteomicsDB" id="241081"/>
<dbReference type="EnsemblPlants" id="AT5G44460.1">
    <property type="protein sequence ID" value="AT5G44460.1"/>
    <property type="gene ID" value="AT5G44460"/>
</dbReference>
<dbReference type="GeneID" id="834473"/>
<dbReference type="Gramene" id="AT5G44460.1">
    <property type="protein sequence ID" value="AT5G44460.1"/>
    <property type="gene ID" value="AT5G44460"/>
</dbReference>
<dbReference type="KEGG" id="ath:AT5G44460"/>
<dbReference type="Araport" id="AT5G44460"/>
<dbReference type="TAIR" id="AT5G44460">
    <property type="gene designation" value="CML43"/>
</dbReference>
<dbReference type="eggNOG" id="KOG0027">
    <property type="taxonomic scope" value="Eukaryota"/>
</dbReference>
<dbReference type="HOGENOM" id="CLU_061288_20_3_1"/>
<dbReference type="InParanoid" id="Q9FI19"/>
<dbReference type="OMA" id="GEGSCCD"/>
<dbReference type="OrthoDB" id="26525at2759"/>
<dbReference type="PhylomeDB" id="Q9FI19"/>
<dbReference type="PRO" id="PR:Q9FI19"/>
<dbReference type="Proteomes" id="UP000006548">
    <property type="component" value="Chromosome 5"/>
</dbReference>
<dbReference type="ExpressionAtlas" id="Q9FI19">
    <property type="expression patterns" value="baseline and differential"/>
</dbReference>
<dbReference type="GO" id="GO:0005829">
    <property type="term" value="C:cytosol"/>
    <property type="evidence" value="ECO:0000314"/>
    <property type="project" value="TAIR"/>
</dbReference>
<dbReference type="GO" id="GO:0005634">
    <property type="term" value="C:nucleus"/>
    <property type="evidence" value="ECO:0000314"/>
    <property type="project" value="TAIR"/>
</dbReference>
<dbReference type="GO" id="GO:0005509">
    <property type="term" value="F:calcium ion binding"/>
    <property type="evidence" value="ECO:0000314"/>
    <property type="project" value="TAIR"/>
</dbReference>
<dbReference type="GO" id="GO:0061891">
    <property type="term" value="F:calcium ion sensor activity"/>
    <property type="evidence" value="ECO:0000314"/>
    <property type="project" value="TAIR"/>
</dbReference>
<dbReference type="GO" id="GO:0051592">
    <property type="term" value="P:response to calcium ion"/>
    <property type="evidence" value="ECO:0000314"/>
    <property type="project" value="TAIR"/>
</dbReference>
<dbReference type="CDD" id="cd00051">
    <property type="entry name" value="EFh"/>
    <property type="match status" value="1"/>
</dbReference>
<dbReference type="FunFam" id="1.10.238.10:FF:000293">
    <property type="entry name" value="Calcium-binding protein CML42"/>
    <property type="match status" value="1"/>
</dbReference>
<dbReference type="Gene3D" id="1.10.238.10">
    <property type="entry name" value="EF-hand"/>
    <property type="match status" value="2"/>
</dbReference>
<dbReference type="InterPro" id="IPR050145">
    <property type="entry name" value="Centrin_CML-like"/>
</dbReference>
<dbReference type="InterPro" id="IPR011992">
    <property type="entry name" value="EF-hand-dom_pair"/>
</dbReference>
<dbReference type="InterPro" id="IPR018247">
    <property type="entry name" value="EF_Hand_1_Ca_BS"/>
</dbReference>
<dbReference type="InterPro" id="IPR002048">
    <property type="entry name" value="EF_hand_dom"/>
</dbReference>
<dbReference type="PANTHER" id="PTHR23050">
    <property type="entry name" value="CALCIUM BINDING PROTEIN"/>
    <property type="match status" value="1"/>
</dbReference>
<dbReference type="Pfam" id="PF13499">
    <property type="entry name" value="EF-hand_7"/>
    <property type="match status" value="2"/>
</dbReference>
<dbReference type="SMART" id="SM00054">
    <property type="entry name" value="EFh"/>
    <property type="match status" value="3"/>
</dbReference>
<dbReference type="SUPFAM" id="SSF47473">
    <property type="entry name" value="EF-hand"/>
    <property type="match status" value="1"/>
</dbReference>
<dbReference type="PROSITE" id="PS00018">
    <property type="entry name" value="EF_HAND_1"/>
    <property type="match status" value="3"/>
</dbReference>
<dbReference type="PROSITE" id="PS50222">
    <property type="entry name" value="EF_HAND_2"/>
    <property type="match status" value="3"/>
</dbReference>
<gene>
    <name type="primary">CML43</name>
    <name type="ordered locus">At5g44460</name>
    <name type="ORF">MFC16.12</name>
</gene>
<accession>Q9FI19</accession>
<accession>Q42141</accession>
<sequence length="181" mass="20254">MEINNEKKKLSRQSSSFRLRSPSLNALRLHRVFDLFDKNNDGFITVEELSQALSRLGLDADFSDLKSTVDSFIKPDKTGLRFDDFAALHKTLDESFFGGEGSCCDGSPESDLEEAFNVFDEDGDGFISAVELQKVLKKLGLPEAGEIEQVEKMIVSVDSNHDGRVDFFEFKNMMQTVVVPS</sequence>
<name>CML43_ARATH</name>
<comment type="function">
    <text evidence="2">Calcium-binding protein that may mediate calcium-dependent signal during plant defense response.</text>
</comment>
<comment type="tissue specificity">
    <text evidence="2">Expressed specifically in roots.</text>
</comment>
<comment type="induction">
    <text evidence="2">In leaves by infection with the bacterial pathogen P.syringae.</text>
</comment>
<comment type="caution">
    <text evidence="3">Although assigned as a calmodulin family member by Ref.5, it only contains EF-hand domains.</text>
</comment>
<comment type="sequence caution" evidence="3">
    <conflict type="frameshift">
        <sequence resource="EMBL-CDS" id="CAA81405"/>
    </conflict>
</comment>
<keyword id="KW-0106">Calcium</keyword>
<keyword id="KW-0479">Metal-binding</keyword>
<keyword id="KW-1185">Reference proteome</keyword>
<keyword id="KW-0677">Repeat</keyword>
<proteinExistence type="evidence at transcript level"/>
<organism>
    <name type="scientific">Arabidopsis thaliana</name>
    <name type="common">Mouse-ear cress</name>
    <dbReference type="NCBI Taxonomy" id="3702"/>
    <lineage>
        <taxon>Eukaryota</taxon>
        <taxon>Viridiplantae</taxon>
        <taxon>Streptophyta</taxon>
        <taxon>Embryophyta</taxon>
        <taxon>Tracheophyta</taxon>
        <taxon>Spermatophyta</taxon>
        <taxon>Magnoliopsida</taxon>
        <taxon>eudicotyledons</taxon>
        <taxon>Gunneridae</taxon>
        <taxon>Pentapetalae</taxon>
        <taxon>rosids</taxon>
        <taxon>malvids</taxon>
        <taxon>Brassicales</taxon>
        <taxon>Brassicaceae</taxon>
        <taxon>Camelineae</taxon>
        <taxon>Arabidopsis</taxon>
    </lineage>
</organism>